<proteinExistence type="inferred from homology"/>
<organism>
    <name type="scientific">Gemmatimonas aurantiaca (strain DSM 14586 / JCM 11422 / NBRC 100505 / T-27)</name>
    <dbReference type="NCBI Taxonomy" id="379066"/>
    <lineage>
        <taxon>Bacteria</taxon>
        <taxon>Pseudomonadati</taxon>
        <taxon>Gemmatimonadota</taxon>
        <taxon>Gemmatimonadia</taxon>
        <taxon>Gemmatimonadales</taxon>
        <taxon>Gemmatimonadaceae</taxon>
        <taxon>Gemmatimonas</taxon>
    </lineage>
</organism>
<reference key="1">
    <citation type="submission" date="2006-03" db="EMBL/GenBank/DDBJ databases">
        <title>Complete genome sequence of Gemmatimonas aurantiaca T-27 that represents a novel phylum Gemmatimonadetes.</title>
        <authorList>
            <person name="Takasaki K."/>
            <person name="Ichikawa N."/>
            <person name="Miura H."/>
            <person name="Matsushita S."/>
            <person name="Watanabe Y."/>
            <person name="Oguchi A."/>
            <person name="Ankai A."/>
            <person name="Yashiro I."/>
            <person name="Takahashi M."/>
            <person name="Terui Y."/>
            <person name="Fukui S."/>
            <person name="Yokoyama H."/>
            <person name="Tanikawa S."/>
            <person name="Hanada S."/>
            <person name="Kamagata Y."/>
            <person name="Fujita N."/>
        </authorList>
    </citation>
    <scope>NUCLEOTIDE SEQUENCE [LARGE SCALE GENOMIC DNA]</scope>
    <source>
        <strain>DSM 14586 / JCM 11422 / NBRC 100505 / T-27</strain>
    </source>
</reference>
<keyword id="KW-1185">Reference proteome</keyword>
<keyword id="KW-0687">Ribonucleoprotein</keyword>
<keyword id="KW-0689">Ribosomal protein</keyword>
<keyword id="KW-0694">RNA-binding</keyword>
<keyword id="KW-0699">rRNA-binding</keyword>
<evidence type="ECO:0000255" key="1">
    <source>
        <dbReference type="HAMAP-Rule" id="MF_00531"/>
    </source>
</evidence>
<evidence type="ECO:0000305" key="2"/>
<sequence length="96" mass="10653">MSRSIKKGPFVAERLEAKVVTMNAKSEKKVVKTWSRASTILPEFVGHTFAVHNGNKFIPVYVTENMVGHKLGEFSPTRLFRGHAGQKADVKKKGGK</sequence>
<name>RS19_GEMAT</name>
<accession>C1A6Q9</accession>
<gene>
    <name evidence="1" type="primary">rpsS</name>
    <name type="ordered locus">GAU_0877</name>
</gene>
<dbReference type="EMBL" id="AP009153">
    <property type="protein sequence ID" value="BAH37919.1"/>
    <property type="molecule type" value="Genomic_DNA"/>
</dbReference>
<dbReference type="RefSeq" id="WP_012682366.1">
    <property type="nucleotide sequence ID" value="NC_012489.1"/>
</dbReference>
<dbReference type="SMR" id="C1A6Q9"/>
<dbReference type="STRING" id="379066.GAU_0877"/>
<dbReference type="KEGG" id="gau:GAU_0877"/>
<dbReference type="eggNOG" id="COG0185">
    <property type="taxonomic scope" value="Bacteria"/>
</dbReference>
<dbReference type="HOGENOM" id="CLU_144911_0_1_0"/>
<dbReference type="OrthoDB" id="9797833at2"/>
<dbReference type="Proteomes" id="UP000002209">
    <property type="component" value="Chromosome"/>
</dbReference>
<dbReference type="GO" id="GO:0005737">
    <property type="term" value="C:cytoplasm"/>
    <property type="evidence" value="ECO:0007669"/>
    <property type="project" value="UniProtKB-ARBA"/>
</dbReference>
<dbReference type="GO" id="GO:0015935">
    <property type="term" value="C:small ribosomal subunit"/>
    <property type="evidence" value="ECO:0007669"/>
    <property type="project" value="InterPro"/>
</dbReference>
<dbReference type="GO" id="GO:0019843">
    <property type="term" value="F:rRNA binding"/>
    <property type="evidence" value="ECO:0007669"/>
    <property type="project" value="UniProtKB-UniRule"/>
</dbReference>
<dbReference type="GO" id="GO:0003735">
    <property type="term" value="F:structural constituent of ribosome"/>
    <property type="evidence" value="ECO:0007669"/>
    <property type="project" value="InterPro"/>
</dbReference>
<dbReference type="GO" id="GO:0000028">
    <property type="term" value="P:ribosomal small subunit assembly"/>
    <property type="evidence" value="ECO:0007669"/>
    <property type="project" value="TreeGrafter"/>
</dbReference>
<dbReference type="GO" id="GO:0006412">
    <property type="term" value="P:translation"/>
    <property type="evidence" value="ECO:0007669"/>
    <property type="project" value="UniProtKB-UniRule"/>
</dbReference>
<dbReference type="FunFam" id="3.30.860.10:FF:000001">
    <property type="entry name" value="30S ribosomal protein S19"/>
    <property type="match status" value="1"/>
</dbReference>
<dbReference type="Gene3D" id="3.30.860.10">
    <property type="entry name" value="30s Ribosomal Protein S19, Chain A"/>
    <property type="match status" value="1"/>
</dbReference>
<dbReference type="HAMAP" id="MF_00531">
    <property type="entry name" value="Ribosomal_uS19"/>
    <property type="match status" value="1"/>
</dbReference>
<dbReference type="InterPro" id="IPR002222">
    <property type="entry name" value="Ribosomal_uS19"/>
</dbReference>
<dbReference type="InterPro" id="IPR005732">
    <property type="entry name" value="Ribosomal_uS19_bac-type"/>
</dbReference>
<dbReference type="InterPro" id="IPR020934">
    <property type="entry name" value="Ribosomal_uS19_CS"/>
</dbReference>
<dbReference type="InterPro" id="IPR023575">
    <property type="entry name" value="Ribosomal_uS19_SF"/>
</dbReference>
<dbReference type="NCBIfam" id="TIGR01050">
    <property type="entry name" value="rpsS_bact"/>
    <property type="match status" value="1"/>
</dbReference>
<dbReference type="PANTHER" id="PTHR11880">
    <property type="entry name" value="RIBOSOMAL PROTEIN S19P FAMILY MEMBER"/>
    <property type="match status" value="1"/>
</dbReference>
<dbReference type="PANTHER" id="PTHR11880:SF8">
    <property type="entry name" value="SMALL RIBOSOMAL SUBUNIT PROTEIN US19M"/>
    <property type="match status" value="1"/>
</dbReference>
<dbReference type="Pfam" id="PF00203">
    <property type="entry name" value="Ribosomal_S19"/>
    <property type="match status" value="1"/>
</dbReference>
<dbReference type="PIRSF" id="PIRSF002144">
    <property type="entry name" value="Ribosomal_S19"/>
    <property type="match status" value="1"/>
</dbReference>
<dbReference type="PRINTS" id="PR00975">
    <property type="entry name" value="RIBOSOMALS19"/>
</dbReference>
<dbReference type="SUPFAM" id="SSF54570">
    <property type="entry name" value="Ribosomal protein S19"/>
    <property type="match status" value="1"/>
</dbReference>
<dbReference type="PROSITE" id="PS00323">
    <property type="entry name" value="RIBOSOMAL_S19"/>
    <property type="match status" value="1"/>
</dbReference>
<protein>
    <recommendedName>
        <fullName evidence="1">Small ribosomal subunit protein uS19</fullName>
    </recommendedName>
    <alternativeName>
        <fullName evidence="2">30S ribosomal protein S19</fullName>
    </alternativeName>
</protein>
<feature type="chain" id="PRO_1000211807" description="Small ribosomal subunit protein uS19">
    <location>
        <begin position="1"/>
        <end position="96"/>
    </location>
</feature>
<comment type="function">
    <text evidence="1">Protein S19 forms a complex with S13 that binds strongly to the 16S ribosomal RNA.</text>
</comment>
<comment type="similarity">
    <text evidence="1">Belongs to the universal ribosomal protein uS19 family.</text>
</comment>